<keyword id="KW-1003">Cell membrane</keyword>
<keyword id="KW-0472">Membrane</keyword>
<keyword id="KW-0812">Transmembrane</keyword>
<keyword id="KW-1133">Transmembrane helix</keyword>
<keyword id="KW-0813">Transport</keyword>
<sequence>MYVSSLLFLYASESYESFIFHFQMCYNKAHNGFMPSIFQQLKGLGEGLQWKVGISLDHQEKQTSSHEKEMTSPNSATRLIPSDWRRELLAGTVSFFAAVYIIIVNSSILADAGIPQEAGIIATILASAIGCFIMGLWGNAPLVIVPGMGINAMFTYTLVQGMGLTWQQALAAVMMSGICFFAISMTSLVEKLRTAIPASLQEAISVGIGLMLVLIGLHKGGVIASDRSSVIAVQSFADPGVLVTLATLALTCILYIRKVPGNLLLAIIGGSALAYLFKAVPSKAATGVGGSSWSSYGDLFGQLSVKGASITTLVIAVFSLTLVIVFENVGLINAQLKMSGRTERFKRVTQATSLTVILSGIFGTSPTVSTVEAAAGISAGGRTGWASIATGTLFLLSFIAMPVITLVPDQAVAPILIFIGGLMMPAVRHISFERMEEGLPAFFIIAFIPLMHSIVDGIAIGFISYALFHIAVGKWREVKPLFYIISLLFVMHFVLQTM</sequence>
<gene>
    <name evidence="5" type="ORF">PL1_1481</name>
</gene>
<proteinExistence type="evidence at protein level"/>
<comment type="function">
    <text evidence="2">Transports adenine, guanine, hypoxanthine, xanthine, cytosine and uracil. Transport is probably proton-dependent.</text>
</comment>
<comment type="activity regulation">
    <text evidence="2">Inhibited by the proton gradient disruptor carbonyl cyanide m-chlorophenylhydrazone (CCCP), but not by the sodium gradient disruptor ouabain.</text>
</comment>
<comment type="biophysicochemical properties">
    <kinetics>
        <KM evidence="2">1.92 uM for adenine</KM>
    </kinetics>
</comment>
<comment type="subcellular location">
    <subcellularLocation>
        <location evidence="4">Cell membrane</location>
        <topology evidence="1">Multi-pass membrane protein</topology>
    </subcellularLocation>
</comment>
<comment type="similarity">
    <text evidence="4">Belongs to the nucleobase:cation symporter-2 (NCS2) (TC 2.A.40) family. Azg-like subfamily.</text>
</comment>
<protein>
    <recommendedName>
        <fullName evidence="3">Nucleobase transporter PlAzg2</fullName>
    </recommendedName>
</protein>
<feature type="chain" id="PRO_0000446240" description="Nucleobase transporter PlAzg2">
    <location>
        <begin position="1"/>
        <end position="498"/>
    </location>
</feature>
<feature type="transmembrane region" description="Helical" evidence="1">
    <location>
        <begin position="88"/>
        <end position="108"/>
    </location>
</feature>
<feature type="transmembrane region" description="Helical" evidence="1">
    <location>
        <begin position="118"/>
        <end position="138"/>
    </location>
</feature>
<feature type="transmembrane region" description="Helical" evidence="1">
    <location>
        <begin position="142"/>
        <end position="162"/>
    </location>
</feature>
<feature type="transmembrane region" description="Helical" evidence="1">
    <location>
        <begin position="169"/>
        <end position="189"/>
    </location>
</feature>
<feature type="transmembrane region" description="Helical" evidence="1">
    <location>
        <begin position="203"/>
        <end position="223"/>
    </location>
</feature>
<feature type="transmembrane region" description="Helical" evidence="1">
    <location>
        <begin position="236"/>
        <end position="256"/>
    </location>
</feature>
<feature type="transmembrane region" description="Helical" evidence="1">
    <location>
        <begin position="259"/>
        <end position="279"/>
    </location>
</feature>
<feature type="transmembrane region" description="Helical" evidence="1">
    <location>
        <begin position="312"/>
        <end position="332"/>
    </location>
</feature>
<feature type="transmembrane region" description="Helical" evidence="1">
    <location>
        <begin position="357"/>
        <end position="377"/>
    </location>
</feature>
<feature type="transmembrane region" description="Helical" evidence="1">
    <location>
        <begin position="388"/>
        <end position="408"/>
    </location>
</feature>
<feature type="transmembrane region" description="Helical" evidence="1">
    <location>
        <begin position="412"/>
        <end position="432"/>
    </location>
</feature>
<feature type="transmembrane region" description="Helical" evidence="1">
    <location>
        <begin position="443"/>
        <end position="463"/>
    </location>
</feature>
<feature type="transmembrane region" description="Helical" evidence="1">
    <location>
        <begin position="478"/>
        <end position="498"/>
    </location>
</feature>
<name>AZG2_PAELB</name>
<dbReference type="EMBL" id="ADZY03000057">
    <property type="protein sequence ID" value="PCK71842.1"/>
    <property type="molecule type" value="Genomic_DNA"/>
</dbReference>
<dbReference type="SMR" id="A0A2A5K485"/>
<dbReference type="GO" id="GO:0005886">
    <property type="term" value="C:plasma membrane"/>
    <property type="evidence" value="ECO:0007669"/>
    <property type="project" value="UniProtKB-SubCell"/>
</dbReference>
<dbReference type="GO" id="GO:0005345">
    <property type="term" value="F:purine nucleobase transmembrane transporter activity"/>
    <property type="evidence" value="ECO:0007669"/>
    <property type="project" value="TreeGrafter"/>
</dbReference>
<dbReference type="InterPro" id="IPR045018">
    <property type="entry name" value="Azg-like"/>
</dbReference>
<dbReference type="InterPro" id="IPR006043">
    <property type="entry name" value="NCS2"/>
</dbReference>
<dbReference type="PANTHER" id="PTHR43337">
    <property type="entry name" value="XANTHINE/URACIL PERMEASE C887.17-RELATED"/>
    <property type="match status" value="1"/>
</dbReference>
<dbReference type="PANTHER" id="PTHR43337:SF2">
    <property type="entry name" value="XANTHINE_URACIL PERMEASE"/>
    <property type="match status" value="1"/>
</dbReference>
<dbReference type="Pfam" id="PF00860">
    <property type="entry name" value="Xan_ur_permease"/>
    <property type="match status" value="1"/>
</dbReference>
<accession>A0A2A5K485</accession>
<evidence type="ECO:0000255" key="1"/>
<evidence type="ECO:0000269" key="2">
    <source>
    </source>
</evidence>
<evidence type="ECO:0000303" key="3">
    <source>
    </source>
</evidence>
<evidence type="ECO:0000305" key="4"/>
<evidence type="ECO:0000312" key="5">
    <source>
        <dbReference type="EMBL" id="PCK71842.1"/>
    </source>
</evidence>
<reference key="1">
    <citation type="journal article" date="2011" name="BMC Genomics">
        <title>Updated genome assembly and annotation of Paenibacillus larvae, the agent of American foulbrood disease of honey bees.</title>
        <authorList>
            <person name="Chan Q.W."/>
            <person name="Cornman R.S."/>
            <person name="Birol I."/>
            <person name="Liao N.Y."/>
            <person name="Chan S.K."/>
            <person name="Docking T.R."/>
            <person name="Jackman S.D."/>
            <person name="Taylor G.A."/>
            <person name="Jones S.J."/>
            <person name="de Graaf D.C."/>
            <person name="Evans J.D."/>
            <person name="Foster L.J."/>
        </authorList>
    </citation>
    <scope>NUCLEOTIDE SEQUENCE [LARGE SCALE GENOMIC DNA]</scope>
    <source>
        <strain>NRRL B-3650 / LMG 16245</strain>
    </source>
</reference>
<reference key="2">
    <citation type="journal article" date="2018" name="FEMS Microbiol. Lett.">
        <title>The solute transport profile of two Aza-guanine transporters from the Honey bee pathogen Paenibacillus larvae.</title>
        <authorList>
            <person name="Alexander C.R."/>
            <person name="Dingman D.W."/>
            <person name="Schultes N.P."/>
            <person name="Mourad G.S."/>
        </authorList>
    </citation>
    <scope>FUNCTION</scope>
    <scope>ACTIVITY REGULATION</scope>
    <scope>BIOPHYSICOCHEMICAL PROPERTIES</scope>
    <source>
        <strain>NRRL B-3650 / LMG 16245</strain>
    </source>
</reference>
<organism>
    <name type="scientific">Paenibacillus larvae subsp. larvae (strain NRRL B-3650 / LMG 16245)</name>
    <dbReference type="NCBI Taxonomy" id="741161"/>
    <lineage>
        <taxon>Bacteria</taxon>
        <taxon>Bacillati</taxon>
        <taxon>Bacillota</taxon>
        <taxon>Bacilli</taxon>
        <taxon>Bacillales</taxon>
        <taxon>Paenibacillaceae</taxon>
        <taxon>Paenibacillus</taxon>
    </lineage>
</organism>